<dbReference type="EMBL" id="CP000970">
    <property type="protein sequence ID" value="ACB16953.1"/>
    <property type="status" value="ALT_INIT"/>
    <property type="molecule type" value="Genomic_DNA"/>
</dbReference>
<dbReference type="BMRB" id="B1LHY8"/>
<dbReference type="SMR" id="B1LHY8"/>
<dbReference type="KEGG" id="ecm:EcSMS35_1970"/>
<dbReference type="HOGENOM" id="CLU_155118_1_0_6"/>
<dbReference type="Proteomes" id="UP000007011">
    <property type="component" value="Chromosome"/>
</dbReference>
<dbReference type="Gene3D" id="3.10.510.20">
    <property type="entry name" value="YcgL domain"/>
    <property type="match status" value="1"/>
</dbReference>
<dbReference type="HAMAP" id="MF_01866">
    <property type="entry name" value="UPF0745"/>
    <property type="match status" value="1"/>
</dbReference>
<dbReference type="InterPro" id="IPR038068">
    <property type="entry name" value="YcgL-like_sf"/>
</dbReference>
<dbReference type="InterPro" id="IPR027354">
    <property type="entry name" value="YcgL_dom"/>
</dbReference>
<dbReference type="PANTHER" id="PTHR38109">
    <property type="entry name" value="PROTEIN YCGL"/>
    <property type="match status" value="1"/>
</dbReference>
<dbReference type="PANTHER" id="PTHR38109:SF1">
    <property type="entry name" value="PROTEIN YCGL"/>
    <property type="match status" value="1"/>
</dbReference>
<dbReference type="Pfam" id="PF05166">
    <property type="entry name" value="YcgL"/>
    <property type="match status" value="1"/>
</dbReference>
<dbReference type="SUPFAM" id="SSF160191">
    <property type="entry name" value="YcgL-like"/>
    <property type="match status" value="1"/>
</dbReference>
<dbReference type="PROSITE" id="PS51648">
    <property type="entry name" value="YCGL"/>
    <property type="match status" value="1"/>
</dbReference>
<feature type="chain" id="PRO_0000375293" description="Protein YcgL">
    <location>
        <begin position="1"/>
        <end position="108"/>
    </location>
</feature>
<feature type="domain" description="YcgL" evidence="1">
    <location>
        <begin position="12"/>
        <end position="96"/>
    </location>
</feature>
<proteinExistence type="inferred from homology"/>
<reference key="1">
    <citation type="journal article" date="2008" name="J. Bacteriol.">
        <title>Insights into the environmental resistance gene pool from the genome sequence of the multidrug-resistant environmental isolate Escherichia coli SMS-3-5.</title>
        <authorList>
            <person name="Fricke W.F."/>
            <person name="Wright M.S."/>
            <person name="Lindell A.H."/>
            <person name="Harkins D.M."/>
            <person name="Baker-Austin C."/>
            <person name="Ravel J."/>
            <person name="Stepanauskas R."/>
        </authorList>
    </citation>
    <scope>NUCLEOTIDE SEQUENCE [LARGE SCALE GENOMIC DNA]</scope>
    <source>
        <strain>SMS-3-5 / SECEC</strain>
    </source>
</reference>
<name>YCGL_ECOSM</name>
<organism>
    <name type="scientific">Escherichia coli (strain SMS-3-5 / SECEC)</name>
    <dbReference type="NCBI Taxonomy" id="439855"/>
    <lineage>
        <taxon>Bacteria</taxon>
        <taxon>Pseudomonadati</taxon>
        <taxon>Pseudomonadota</taxon>
        <taxon>Gammaproteobacteria</taxon>
        <taxon>Enterobacterales</taxon>
        <taxon>Enterobacteriaceae</taxon>
        <taxon>Escherichia</taxon>
    </lineage>
</organism>
<evidence type="ECO:0000255" key="1">
    <source>
        <dbReference type="HAMAP-Rule" id="MF_01866"/>
    </source>
</evidence>
<evidence type="ECO:0000305" key="2"/>
<comment type="sequence caution" evidence="2">
    <conflict type="erroneous initiation">
        <sequence resource="EMBL-CDS" id="ACB16953"/>
    </conflict>
</comment>
<protein>
    <recommendedName>
        <fullName evidence="1">Protein YcgL</fullName>
    </recommendedName>
</protein>
<sequence length="108" mass="12415">MPKPGILKSKSMFCVIYRSSKRDQTYLYVEKKDDFSRVPEELMKGFGQPQLAMILPLDGRKKLVNADIEKVKQALTEQGYYLQLPPPPEDLLKQHLSVMGQKTDDTNK</sequence>
<gene>
    <name evidence="1" type="primary">ycgL</name>
    <name type="ordered locus">EcSMS35_1970</name>
</gene>
<accession>B1LHY8</accession>